<organism>
    <name type="scientific">Hordeum vulgare</name>
    <name type="common">Barley</name>
    <dbReference type="NCBI Taxonomy" id="4513"/>
    <lineage>
        <taxon>Eukaryota</taxon>
        <taxon>Viridiplantae</taxon>
        <taxon>Streptophyta</taxon>
        <taxon>Embryophyta</taxon>
        <taxon>Tracheophyta</taxon>
        <taxon>Spermatophyta</taxon>
        <taxon>Magnoliopsida</taxon>
        <taxon>Liliopsida</taxon>
        <taxon>Poales</taxon>
        <taxon>Poaceae</taxon>
        <taxon>BOP clade</taxon>
        <taxon>Pooideae</taxon>
        <taxon>Triticodae</taxon>
        <taxon>Triticeae</taxon>
        <taxon>Hordeinae</taxon>
        <taxon>Hordeum</taxon>
    </lineage>
</organism>
<name>GRP_HORVU</name>
<sequence>MADVEYRCFVGGLRWATDDQSLQNAFSKYGDVIDSKIITDRETGRSRGFGFVTFASDEAMRQAIEAMNGQDLDGRNITVNEAQSRRSDGGGGFGGGGGGYGGQRREGGGGGYGGGGGGYGGGRSGGGGGYGSRDGGGGGYGGGGGGYGGSRGGSGGGNWRE</sequence>
<proteinExistence type="evidence at protein level"/>
<reference evidence="6 7" key="1">
    <citation type="journal article" date="1996" name="Plant Mol. Biol.">
        <title>A low-temperature-responsive gene from barley encodes a protein with single-stranded nucleic acid-binding activity which is phosphorylated in vitro.</title>
        <authorList>
            <person name="Dunn M.A."/>
            <person name="Brown K."/>
            <person name="Lightowlers R."/>
            <person name="Hughes M.A."/>
        </authorList>
    </citation>
    <scope>NUCLEOTIDE SEQUENCE [MRNA]</scope>
    <scope>FUNCTION</scope>
    <scope>INDUCTION</scope>
    <scope>PHOSPHORYLATION AT SER-87</scope>
    <source>
        <strain evidence="4">cv. Igri</strain>
        <tissue evidence="7">Leaf meristem</tissue>
    </source>
</reference>
<protein>
    <recommendedName>
        <fullName evidence="1 5">Glycine-rich RNA-binding protein blt801</fullName>
    </recommendedName>
    <alternativeName>
        <fullName evidence="7">Low temperature-responsive RNA-binding protein</fullName>
    </alternativeName>
</protein>
<evidence type="ECO:0000250" key="1">
    <source>
        <dbReference type="UniProtKB" id="Q03250"/>
    </source>
</evidence>
<evidence type="ECO:0000255" key="2">
    <source>
        <dbReference type="PROSITE-ProRule" id="PRU00176"/>
    </source>
</evidence>
<evidence type="ECO:0000256" key="3">
    <source>
        <dbReference type="SAM" id="MobiDB-lite"/>
    </source>
</evidence>
<evidence type="ECO:0000269" key="4">
    <source>
    </source>
</evidence>
<evidence type="ECO:0000303" key="5">
    <source>
    </source>
</evidence>
<evidence type="ECO:0000305" key="6"/>
<evidence type="ECO:0000312" key="7">
    <source>
        <dbReference type="EMBL" id="AAB07749.1"/>
    </source>
</evidence>
<comment type="function">
    <text evidence="1 4">Binds single-stranded DNA and homoribopolymers of guanine, uracil and adenine, but not cytosine. Also binds RNA, with a preference for RNA containing a high proportion of adenine within an open loop structure. Possibly has a role in RNA transcription or processing during stress.</text>
</comment>
<comment type="induction">
    <text evidence="4">Induced by low temperature stress or foliar application of the phytohormone abscisic acid (ABA).</text>
</comment>
<gene>
    <name evidence="5 7" type="primary">blt801</name>
</gene>
<accession>Q43472</accession>
<keyword id="KW-0238">DNA-binding</keyword>
<keyword id="KW-0507">mRNA processing</keyword>
<keyword id="KW-0597">Phosphoprotein</keyword>
<keyword id="KW-0694">RNA-binding</keyword>
<keyword id="KW-0346">Stress response</keyword>
<keyword id="KW-0804">Transcription</keyword>
<dbReference type="EMBL" id="U49482">
    <property type="protein sequence ID" value="AAB07749.1"/>
    <property type="molecule type" value="mRNA"/>
</dbReference>
<dbReference type="PIR" id="S71453">
    <property type="entry name" value="S71453"/>
</dbReference>
<dbReference type="SMR" id="Q43472"/>
<dbReference type="iPTMnet" id="Q43472"/>
<dbReference type="ExpressionAtlas" id="Q43472">
    <property type="expression patterns" value="baseline and differential"/>
</dbReference>
<dbReference type="GO" id="GO:0003723">
    <property type="term" value="F:RNA binding"/>
    <property type="evidence" value="ECO:0000314"/>
    <property type="project" value="UniProtKB"/>
</dbReference>
<dbReference type="GO" id="GO:0003697">
    <property type="term" value="F:single-stranded DNA binding"/>
    <property type="evidence" value="ECO:0000314"/>
    <property type="project" value="UniProtKB"/>
</dbReference>
<dbReference type="GO" id="GO:0006397">
    <property type="term" value="P:mRNA processing"/>
    <property type="evidence" value="ECO:0007669"/>
    <property type="project" value="UniProtKB-KW"/>
</dbReference>
<dbReference type="GO" id="GO:0009737">
    <property type="term" value="P:response to abscisic acid"/>
    <property type="evidence" value="ECO:0000314"/>
    <property type="project" value="UniProtKB"/>
</dbReference>
<dbReference type="GO" id="GO:0009409">
    <property type="term" value="P:response to cold"/>
    <property type="evidence" value="ECO:0000314"/>
    <property type="project" value="UniProtKB"/>
</dbReference>
<dbReference type="CDD" id="cd21608">
    <property type="entry name" value="RRM2_NsCP33_like"/>
    <property type="match status" value="1"/>
</dbReference>
<dbReference type="FunFam" id="3.30.70.330:FF:000430">
    <property type="entry name" value="Glycine-rich RNA-binding protein GRP1A"/>
    <property type="match status" value="1"/>
</dbReference>
<dbReference type="Gene3D" id="3.30.70.330">
    <property type="match status" value="1"/>
</dbReference>
<dbReference type="InterPro" id="IPR012677">
    <property type="entry name" value="Nucleotide-bd_a/b_plait_sf"/>
</dbReference>
<dbReference type="InterPro" id="IPR035979">
    <property type="entry name" value="RBD_domain_sf"/>
</dbReference>
<dbReference type="InterPro" id="IPR048289">
    <property type="entry name" value="RRM2_NsCP33-like"/>
</dbReference>
<dbReference type="InterPro" id="IPR000504">
    <property type="entry name" value="RRM_dom"/>
</dbReference>
<dbReference type="InterPro" id="IPR052462">
    <property type="entry name" value="SLIRP/GR-RBP-like"/>
</dbReference>
<dbReference type="PANTHER" id="PTHR48027">
    <property type="entry name" value="HETEROGENEOUS NUCLEAR RIBONUCLEOPROTEIN 87F-RELATED"/>
    <property type="match status" value="1"/>
</dbReference>
<dbReference type="Pfam" id="PF00076">
    <property type="entry name" value="RRM_1"/>
    <property type="match status" value="1"/>
</dbReference>
<dbReference type="SMART" id="SM00360">
    <property type="entry name" value="RRM"/>
    <property type="match status" value="1"/>
</dbReference>
<dbReference type="SUPFAM" id="SSF54928">
    <property type="entry name" value="RNA-binding domain, RBD"/>
    <property type="match status" value="1"/>
</dbReference>
<dbReference type="PROSITE" id="PS50102">
    <property type="entry name" value="RRM"/>
    <property type="match status" value="1"/>
</dbReference>
<feature type="chain" id="PRO_0000390499" description="Glycine-rich RNA-binding protein blt801">
    <location>
        <begin position="1"/>
        <end position="161"/>
    </location>
</feature>
<feature type="domain" description="RRM" evidence="2">
    <location>
        <begin position="6"/>
        <end position="84"/>
    </location>
</feature>
<feature type="region of interest" description="Disordered" evidence="3">
    <location>
        <begin position="72"/>
        <end position="161"/>
    </location>
</feature>
<feature type="compositionally biased region" description="Gly residues" evidence="3">
    <location>
        <begin position="89"/>
        <end position="161"/>
    </location>
</feature>
<feature type="modified residue" description="Phosphoserine; by PKA" evidence="4">
    <location>
        <position position="87"/>
    </location>
</feature>